<sequence length="408" mass="44604">MKRVHIMVLDSFGIGAAGDAEKFGDQGADTLGHIAQAFAEGKADKDGRKGPLHLPNLCRLGLGKAAEESTGKFPVGLDKDAEIIGAYGYASEISSGKDTPSGHWEIAGVPVLFDWGYFKDLKNSFPQELLDNIVKRANLPGYLGNCHASGTVILDELGEEHMKTGKPIFYTSADSVFQIACHEETFGLDKLYELCEIARDELNKGDYNIGRVIARPFIGDKPGNFSRTGNRHDLAVEPPAPTMLKKLVDEKQGHVVSIGKIADIYANVGITKKVKATGIDALFDATIEEMKLAGDNTIVFTNFVDFDSSYGHRRDVVGYGEALELFDRRLPELMELVKEDDILILTADHGCDPTWQGSDHTREHIPVLVYGPKVKPGSLGHRETFADIGQTVVKYFGLSPVEYGKAMF</sequence>
<gene>
    <name evidence="1" type="primary">deoB</name>
    <name type="ordered locus">PMI2414</name>
</gene>
<comment type="function">
    <text evidence="1">Isomerase that catalyzes the conversion of deoxy-ribose 1-phosphate (dRib-1-P) and ribose 1-phosphate (Rib-1-P) to deoxy-ribose 5-phosphate (dRib-5-P) and ribose 5-phosphate (Rib-5-P), respectively.</text>
</comment>
<comment type="catalytic activity">
    <reaction evidence="1">
        <text>2-deoxy-alpha-D-ribose 1-phosphate = 2-deoxy-D-ribose 5-phosphate</text>
        <dbReference type="Rhea" id="RHEA:27658"/>
        <dbReference type="ChEBI" id="CHEBI:57259"/>
        <dbReference type="ChEBI" id="CHEBI:62877"/>
        <dbReference type="EC" id="5.4.2.7"/>
    </reaction>
</comment>
<comment type="catalytic activity">
    <reaction evidence="1">
        <text>alpha-D-ribose 1-phosphate = D-ribose 5-phosphate</text>
        <dbReference type="Rhea" id="RHEA:18793"/>
        <dbReference type="ChEBI" id="CHEBI:57720"/>
        <dbReference type="ChEBI" id="CHEBI:78346"/>
        <dbReference type="EC" id="5.4.2.7"/>
    </reaction>
</comment>
<comment type="cofactor">
    <cofactor evidence="1">
        <name>Mn(2+)</name>
        <dbReference type="ChEBI" id="CHEBI:29035"/>
    </cofactor>
    <text evidence="1">Binds 2 manganese ions.</text>
</comment>
<comment type="pathway">
    <text evidence="1">Carbohydrate degradation; 2-deoxy-D-ribose 1-phosphate degradation; D-glyceraldehyde 3-phosphate and acetaldehyde from 2-deoxy-alpha-D-ribose 1-phosphate: step 1/2.</text>
</comment>
<comment type="subcellular location">
    <subcellularLocation>
        <location evidence="1">Cytoplasm</location>
    </subcellularLocation>
</comment>
<comment type="similarity">
    <text evidence="1">Belongs to the phosphopentomutase family.</text>
</comment>
<feature type="chain" id="PRO_1000133090" description="Phosphopentomutase">
    <location>
        <begin position="1"/>
        <end position="408"/>
    </location>
</feature>
<feature type="binding site" evidence="1">
    <location>
        <position position="10"/>
    </location>
    <ligand>
        <name>Mn(2+)</name>
        <dbReference type="ChEBI" id="CHEBI:29035"/>
        <label>1</label>
    </ligand>
</feature>
<feature type="binding site" evidence="1">
    <location>
        <position position="307"/>
    </location>
    <ligand>
        <name>Mn(2+)</name>
        <dbReference type="ChEBI" id="CHEBI:29035"/>
        <label>2</label>
    </ligand>
</feature>
<feature type="binding site" evidence="1">
    <location>
        <position position="312"/>
    </location>
    <ligand>
        <name>Mn(2+)</name>
        <dbReference type="ChEBI" id="CHEBI:29035"/>
        <label>2</label>
    </ligand>
</feature>
<feature type="binding site" evidence="1">
    <location>
        <position position="348"/>
    </location>
    <ligand>
        <name>Mn(2+)</name>
        <dbReference type="ChEBI" id="CHEBI:29035"/>
        <label>1</label>
    </ligand>
</feature>
<feature type="binding site" evidence="1">
    <location>
        <position position="349"/>
    </location>
    <ligand>
        <name>Mn(2+)</name>
        <dbReference type="ChEBI" id="CHEBI:29035"/>
        <label>1</label>
    </ligand>
</feature>
<feature type="binding site" evidence="1">
    <location>
        <position position="360"/>
    </location>
    <ligand>
        <name>Mn(2+)</name>
        <dbReference type="ChEBI" id="CHEBI:29035"/>
        <label>2</label>
    </ligand>
</feature>
<organism>
    <name type="scientific">Proteus mirabilis (strain HI4320)</name>
    <dbReference type="NCBI Taxonomy" id="529507"/>
    <lineage>
        <taxon>Bacteria</taxon>
        <taxon>Pseudomonadati</taxon>
        <taxon>Pseudomonadota</taxon>
        <taxon>Gammaproteobacteria</taxon>
        <taxon>Enterobacterales</taxon>
        <taxon>Morganellaceae</taxon>
        <taxon>Proteus</taxon>
    </lineage>
</organism>
<reference key="1">
    <citation type="journal article" date="2008" name="J. Bacteriol.">
        <title>Complete genome sequence of uropathogenic Proteus mirabilis, a master of both adherence and motility.</title>
        <authorList>
            <person name="Pearson M.M."/>
            <person name="Sebaihia M."/>
            <person name="Churcher C."/>
            <person name="Quail M.A."/>
            <person name="Seshasayee A.S."/>
            <person name="Luscombe N.M."/>
            <person name="Abdellah Z."/>
            <person name="Arrosmith C."/>
            <person name="Atkin B."/>
            <person name="Chillingworth T."/>
            <person name="Hauser H."/>
            <person name="Jagels K."/>
            <person name="Moule S."/>
            <person name="Mungall K."/>
            <person name="Norbertczak H."/>
            <person name="Rabbinowitsch E."/>
            <person name="Walker D."/>
            <person name="Whithead S."/>
            <person name="Thomson N.R."/>
            <person name="Rather P.N."/>
            <person name="Parkhill J."/>
            <person name="Mobley H.L.T."/>
        </authorList>
    </citation>
    <scope>NUCLEOTIDE SEQUENCE [LARGE SCALE GENOMIC DNA]</scope>
    <source>
        <strain>HI4320</strain>
    </source>
</reference>
<evidence type="ECO:0000255" key="1">
    <source>
        <dbReference type="HAMAP-Rule" id="MF_00740"/>
    </source>
</evidence>
<accession>B4EWA2</accession>
<name>DEOB_PROMH</name>
<protein>
    <recommendedName>
        <fullName evidence="1">Phosphopentomutase</fullName>
        <ecNumber evidence="1">5.4.2.7</ecNumber>
    </recommendedName>
    <alternativeName>
        <fullName evidence="1">Phosphodeoxyribomutase</fullName>
    </alternativeName>
</protein>
<keyword id="KW-0963">Cytoplasm</keyword>
<keyword id="KW-0413">Isomerase</keyword>
<keyword id="KW-0464">Manganese</keyword>
<keyword id="KW-0479">Metal-binding</keyword>
<keyword id="KW-1185">Reference proteome</keyword>
<dbReference type="EC" id="5.4.2.7" evidence="1"/>
<dbReference type="EMBL" id="AM942759">
    <property type="protein sequence ID" value="CAR44772.1"/>
    <property type="molecule type" value="Genomic_DNA"/>
</dbReference>
<dbReference type="RefSeq" id="WP_004245637.1">
    <property type="nucleotide sequence ID" value="NC_010554.1"/>
</dbReference>
<dbReference type="SMR" id="B4EWA2"/>
<dbReference type="EnsemblBacteria" id="CAR44772">
    <property type="protein sequence ID" value="CAR44772"/>
    <property type="gene ID" value="PMI2414"/>
</dbReference>
<dbReference type="GeneID" id="6803194"/>
<dbReference type="KEGG" id="pmr:PMI2414"/>
<dbReference type="eggNOG" id="COG1015">
    <property type="taxonomic scope" value="Bacteria"/>
</dbReference>
<dbReference type="HOGENOM" id="CLU_053861_0_0_6"/>
<dbReference type="UniPathway" id="UPA00002">
    <property type="reaction ID" value="UER00467"/>
</dbReference>
<dbReference type="Proteomes" id="UP000008319">
    <property type="component" value="Chromosome"/>
</dbReference>
<dbReference type="GO" id="GO:0005829">
    <property type="term" value="C:cytosol"/>
    <property type="evidence" value="ECO:0007669"/>
    <property type="project" value="TreeGrafter"/>
</dbReference>
<dbReference type="GO" id="GO:0000287">
    <property type="term" value="F:magnesium ion binding"/>
    <property type="evidence" value="ECO:0007669"/>
    <property type="project" value="InterPro"/>
</dbReference>
<dbReference type="GO" id="GO:0030145">
    <property type="term" value="F:manganese ion binding"/>
    <property type="evidence" value="ECO:0007669"/>
    <property type="project" value="UniProtKB-UniRule"/>
</dbReference>
<dbReference type="GO" id="GO:0008973">
    <property type="term" value="F:phosphopentomutase activity"/>
    <property type="evidence" value="ECO:0007669"/>
    <property type="project" value="UniProtKB-UniRule"/>
</dbReference>
<dbReference type="GO" id="GO:0006018">
    <property type="term" value="P:2-deoxyribose 1-phosphate catabolic process"/>
    <property type="evidence" value="ECO:0007669"/>
    <property type="project" value="UniProtKB-UniRule"/>
</dbReference>
<dbReference type="GO" id="GO:0006015">
    <property type="term" value="P:5-phosphoribose 1-diphosphate biosynthetic process"/>
    <property type="evidence" value="ECO:0007669"/>
    <property type="project" value="UniProtKB-UniPathway"/>
</dbReference>
<dbReference type="GO" id="GO:0043094">
    <property type="term" value="P:metabolic compound salvage"/>
    <property type="evidence" value="ECO:0007669"/>
    <property type="project" value="InterPro"/>
</dbReference>
<dbReference type="GO" id="GO:0009117">
    <property type="term" value="P:nucleotide metabolic process"/>
    <property type="evidence" value="ECO:0007669"/>
    <property type="project" value="InterPro"/>
</dbReference>
<dbReference type="CDD" id="cd16009">
    <property type="entry name" value="PPM"/>
    <property type="match status" value="1"/>
</dbReference>
<dbReference type="FunFam" id="3.30.70.1250:FF:000001">
    <property type="entry name" value="Phosphopentomutase"/>
    <property type="match status" value="1"/>
</dbReference>
<dbReference type="Gene3D" id="3.40.720.10">
    <property type="entry name" value="Alkaline Phosphatase, subunit A"/>
    <property type="match status" value="1"/>
</dbReference>
<dbReference type="Gene3D" id="3.30.70.1250">
    <property type="entry name" value="Phosphopentomutase"/>
    <property type="match status" value="1"/>
</dbReference>
<dbReference type="HAMAP" id="MF_00740">
    <property type="entry name" value="Phosphopentomut"/>
    <property type="match status" value="1"/>
</dbReference>
<dbReference type="InterPro" id="IPR017850">
    <property type="entry name" value="Alkaline_phosphatase_core_sf"/>
</dbReference>
<dbReference type="InterPro" id="IPR010045">
    <property type="entry name" value="DeoB"/>
</dbReference>
<dbReference type="InterPro" id="IPR006124">
    <property type="entry name" value="Metalloenzyme"/>
</dbReference>
<dbReference type="InterPro" id="IPR024052">
    <property type="entry name" value="Phosphopentomutase_DeoB_cap_sf"/>
</dbReference>
<dbReference type="NCBIfam" id="TIGR01696">
    <property type="entry name" value="deoB"/>
    <property type="match status" value="1"/>
</dbReference>
<dbReference type="NCBIfam" id="NF003766">
    <property type="entry name" value="PRK05362.1"/>
    <property type="match status" value="1"/>
</dbReference>
<dbReference type="PANTHER" id="PTHR21110">
    <property type="entry name" value="PHOSPHOPENTOMUTASE"/>
    <property type="match status" value="1"/>
</dbReference>
<dbReference type="PANTHER" id="PTHR21110:SF0">
    <property type="entry name" value="PHOSPHOPENTOMUTASE"/>
    <property type="match status" value="1"/>
</dbReference>
<dbReference type="Pfam" id="PF01676">
    <property type="entry name" value="Metalloenzyme"/>
    <property type="match status" value="1"/>
</dbReference>
<dbReference type="PIRSF" id="PIRSF001491">
    <property type="entry name" value="Ppentomutase"/>
    <property type="match status" value="1"/>
</dbReference>
<dbReference type="SUPFAM" id="SSF53649">
    <property type="entry name" value="Alkaline phosphatase-like"/>
    <property type="match status" value="1"/>
</dbReference>
<dbReference type="SUPFAM" id="SSF143856">
    <property type="entry name" value="DeoB insert domain-like"/>
    <property type="match status" value="1"/>
</dbReference>
<proteinExistence type="inferred from homology"/>